<name>PKN1_CHLPN</name>
<comment type="function">
    <text evidence="1">Together with the serine/threonine kinase PknD, may play a role in the specific interactions with host proteins during intracellular growth.</text>
</comment>
<comment type="catalytic activity">
    <reaction>
        <text>L-seryl-[protein] + ATP = O-phospho-L-seryl-[protein] + ADP + H(+)</text>
        <dbReference type="Rhea" id="RHEA:17989"/>
        <dbReference type="Rhea" id="RHEA-COMP:9863"/>
        <dbReference type="Rhea" id="RHEA-COMP:11604"/>
        <dbReference type="ChEBI" id="CHEBI:15378"/>
        <dbReference type="ChEBI" id="CHEBI:29999"/>
        <dbReference type="ChEBI" id="CHEBI:30616"/>
        <dbReference type="ChEBI" id="CHEBI:83421"/>
        <dbReference type="ChEBI" id="CHEBI:456216"/>
        <dbReference type="EC" id="2.7.11.1"/>
    </reaction>
</comment>
<comment type="catalytic activity">
    <reaction>
        <text>L-threonyl-[protein] + ATP = O-phospho-L-threonyl-[protein] + ADP + H(+)</text>
        <dbReference type="Rhea" id="RHEA:46608"/>
        <dbReference type="Rhea" id="RHEA-COMP:11060"/>
        <dbReference type="Rhea" id="RHEA-COMP:11605"/>
        <dbReference type="ChEBI" id="CHEBI:15378"/>
        <dbReference type="ChEBI" id="CHEBI:30013"/>
        <dbReference type="ChEBI" id="CHEBI:30616"/>
        <dbReference type="ChEBI" id="CHEBI:61977"/>
        <dbReference type="ChEBI" id="CHEBI:456216"/>
        <dbReference type="EC" id="2.7.11.1"/>
    </reaction>
</comment>
<comment type="PTM">
    <text evidence="1">Autophosphorylated on serine and threonine residues.</text>
</comment>
<comment type="similarity">
    <text evidence="2">Belongs to the protein kinase superfamily. Ser/Thr protein kinase family.</text>
</comment>
<organism>
    <name type="scientific">Chlamydia pneumoniae</name>
    <name type="common">Chlamydophila pneumoniae</name>
    <dbReference type="NCBI Taxonomy" id="83558"/>
    <lineage>
        <taxon>Bacteria</taxon>
        <taxon>Pseudomonadati</taxon>
        <taxon>Chlamydiota</taxon>
        <taxon>Chlamydiia</taxon>
        <taxon>Chlamydiales</taxon>
        <taxon>Chlamydiaceae</taxon>
        <taxon>Chlamydia/Chlamydophila group</taxon>
        <taxon>Chlamydia</taxon>
    </lineage>
</organism>
<sequence length="619" mass="70355">MESEKDIGAKFLGDYRILYRKGQSLWSEDLLAEHRFIKKRYLIRLLLPDLGSSQPFMEAFHDVVVKLAKLNHPGILSIENVSESEGRCFLVTQEQDIPILSLTQYLKSIPRKLTELEIVDIVSQLASLLDYVHSEGLAQEEWNLDSVYIHILNGVPKVILPDLGFASLIKERILDGFISDEENRESKIKERVLLHTSEGKQGREDTYAFGAITYYLLFGFLPQGIFPMPSKVFSDFIYDWDFLISSCLSCFMEERAKELFPLIRKKTLGEELQNVVTNCIESSLREVPDPLESSQNLPQAVLKVGETKVSHQQKESAEHLEFVLVEACSIDEAMDTAIESESSSGVEEEGYSLALQSLLVREPVVSRYVEAEKEEPKPQPILTEMVLIEGGEFSRGSVEGQRDELPVHKVILHSFFLDVHPVTNEQFIRYLECCGSEQDKYYNELIRLRDSRIQRRSGRLVIEPGYAKHPVVGVTWYGASGYAEWIGKRLPTEAEWEIAASGGVAALRYPCGEEIEKSRANFFTADTTTVMSYPPNPYGLYDMAGNVYEWCQDWYGYDFYEISAQEPESPQGPAQGVYRVLRGGCWKSLKDDLRCAHRHRNNPGAVNSTYGFRCAKNIN</sequence>
<keyword id="KW-0067">ATP-binding</keyword>
<keyword id="KW-0418">Kinase</keyword>
<keyword id="KW-0547">Nucleotide-binding</keyword>
<keyword id="KW-0597">Phosphoprotein</keyword>
<keyword id="KW-0723">Serine/threonine-protein kinase</keyword>
<keyword id="KW-0808">Transferase</keyword>
<protein>
    <recommendedName>
        <fullName>Serine/threonine-protein kinase pkn1</fullName>
        <ecNumber>2.7.11.1</ecNumber>
    </recommendedName>
</protein>
<evidence type="ECO:0000250" key="1"/>
<evidence type="ECO:0000255" key="2">
    <source>
        <dbReference type="PROSITE-ProRule" id="PRU00159"/>
    </source>
</evidence>
<evidence type="ECO:0000305" key="3"/>
<dbReference type="EC" id="2.7.11.1"/>
<dbReference type="EMBL" id="AE001363">
    <property type="protein sequence ID" value="AAD18301.1"/>
    <property type="molecule type" value="Genomic_DNA"/>
</dbReference>
<dbReference type="EMBL" id="AE002161">
    <property type="protein sequence ID" value="AAF38440.1"/>
    <property type="molecule type" value="Genomic_DNA"/>
</dbReference>
<dbReference type="EMBL" id="BA000008">
    <property type="protein sequence ID" value="BAA98358.1"/>
    <property type="molecule type" value="Genomic_DNA"/>
</dbReference>
<dbReference type="EMBL" id="AE009440">
    <property type="protein sequence ID" value="AAP98082.1"/>
    <property type="molecule type" value="Genomic_DNA"/>
</dbReference>
<dbReference type="PIR" id="A72114">
    <property type="entry name" value="A72114"/>
</dbReference>
<dbReference type="PIR" id="D81556">
    <property type="entry name" value="D81556"/>
</dbReference>
<dbReference type="PIR" id="D86509">
    <property type="entry name" value="D86509"/>
</dbReference>
<dbReference type="RefSeq" id="NP_224356.1">
    <property type="nucleotide sequence ID" value="NC_000922.1"/>
</dbReference>
<dbReference type="RefSeq" id="WP_010882798.1">
    <property type="nucleotide sequence ID" value="NZ_LN847257.1"/>
</dbReference>
<dbReference type="SMR" id="Q7AJA5"/>
<dbReference type="STRING" id="406984.CPK_ORF00662"/>
<dbReference type="GeneID" id="45050193"/>
<dbReference type="KEGG" id="cpa:CP_0625"/>
<dbReference type="KEGG" id="cpj:CPj0148"/>
<dbReference type="KEGG" id="cpn:CPn_0148"/>
<dbReference type="KEGG" id="cpt:CpB0149"/>
<dbReference type="PATRIC" id="fig|115713.3.peg.168"/>
<dbReference type="eggNOG" id="COG0515">
    <property type="taxonomic scope" value="Bacteria"/>
</dbReference>
<dbReference type="eggNOG" id="COG1262">
    <property type="taxonomic scope" value="Bacteria"/>
</dbReference>
<dbReference type="HOGENOM" id="CLU_408763_0_0_0"/>
<dbReference type="OrthoDB" id="9768004at2"/>
<dbReference type="Proteomes" id="UP000000583">
    <property type="component" value="Chromosome"/>
</dbReference>
<dbReference type="Proteomes" id="UP000000801">
    <property type="component" value="Chromosome"/>
</dbReference>
<dbReference type="GO" id="GO:0005524">
    <property type="term" value="F:ATP binding"/>
    <property type="evidence" value="ECO:0007669"/>
    <property type="project" value="UniProtKB-KW"/>
</dbReference>
<dbReference type="GO" id="GO:0120147">
    <property type="term" value="F:formylglycine-generating oxidase activity"/>
    <property type="evidence" value="ECO:0007669"/>
    <property type="project" value="TreeGrafter"/>
</dbReference>
<dbReference type="GO" id="GO:0106310">
    <property type="term" value="F:protein serine kinase activity"/>
    <property type="evidence" value="ECO:0007669"/>
    <property type="project" value="RHEA"/>
</dbReference>
<dbReference type="GO" id="GO:0004674">
    <property type="term" value="F:protein serine/threonine kinase activity"/>
    <property type="evidence" value="ECO:0007669"/>
    <property type="project" value="UniProtKB-KW"/>
</dbReference>
<dbReference type="Gene3D" id="3.90.1580.10">
    <property type="entry name" value="paralog of FGE (formylglycine-generating enzyme)"/>
    <property type="match status" value="1"/>
</dbReference>
<dbReference type="Gene3D" id="3.30.200.20">
    <property type="entry name" value="Phosphorylase Kinase, domain 1"/>
    <property type="match status" value="1"/>
</dbReference>
<dbReference type="Gene3D" id="1.10.510.10">
    <property type="entry name" value="Transferase(Phosphotransferase) domain 1"/>
    <property type="match status" value="1"/>
</dbReference>
<dbReference type="InterPro" id="IPR016187">
    <property type="entry name" value="CTDL_fold"/>
</dbReference>
<dbReference type="InterPro" id="IPR011009">
    <property type="entry name" value="Kinase-like_dom_sf"/>
</dbReference>
<dbReference type="InterPro" id="IPR000719">
    <property type="entry name" value="Prot_kinase_dom"/>
</dbReference>
<dbReference type="InterPro" id="IPR051043">
    <property type="entry name" value="Sulfatase_Mod_Factor_Kinase"/>
</dbReference>
<dbReference type="InterPro" id="IPR005532">
    <property type="entry name" value="SUMF_dom"/>
</dbReference>
<dbReference type="InterPro" id="IPR042095">
    <property type="entry name" value="SUMF_sf"/>
</dbReference>
<dbReference type="PANTHER" id="PTHR23150:SF19">
    <property type="entry name" value="FORMYLGLYCINE-GENERATING ENZYME"/>
    <property type="match status" value="1"/>
</dbReference>
<dbReference type="PANTHER" id="PTHR23150">
    <property type="entry name" value="SULFATASE MODIFYING FACTOR 1, 2"/>
    <property type="match status" value="1"/>
</dbReference>
<dbReference type="Pfam" id="PF03781">
    <property type="entry name" value="FGE-sulfatase"/>
    <property type="match status" value="1"/>
</dbReference>
<dbReference type="SUPFAM" id="SSF56436">
    <property type="entry name" value="C-type lectin-like"/>
    <property type="match status" value="1"/>
</dbReference>
<dbReference type="SUPFAM" id="SSF56112">
    <property type="entry name" value="Protein kinase-like (PK-like)"/>
    <property type="match status" value="1"/>
</dbReference>
<dbReference type="PROSITE" id="PS50011">
    <property type="entry name" value="PROTEIN_KINASE_DOM"/>
    <property type="match status" value="1"/>
</dbReference>
<feature type="chain" id="PRO_0000171188" description="Serine/threonine-protein kinase pkn1">
    <location>
        <begin position="1"/>
        <end position="619"/>
    </location>
</feature>
<feature type="domain" description="Protein kinase" evidence="2">
    <location>
        <begin position="15"/>
        <end position="302"/>
    </location>
</feature>
<feature type="active site" description="Proton acceptor" evidence="2">
    <location>
        <position position="141"/>
    </location>
</feature>
<feature type="binding site" evidence="2">
    <location>
        <begin position="21"/>
        <end position="29"/>
    </location>
    <ligand>
        <name>ATP</name>
        <dbReference type="ChEBI" id="CHEBI:30616"/>
    </ligand>
</feature>
<feature type="sequence conflict" description="In Ref. 2; AAF38440." evidence="3" ref="2">
    <original>V</original>
    <variation>A</variation>
    <location>
        <position position="309"/>
    </location>
</feature>
<feature type="sequence conflict" description="In Ref. 4; AAP98082." evidence="3" ref="4">
    <original>I</original>
    <variation>V</variation>
    <location>
        <position position="515"/>
    </location>
</feature>
<reference key="1">
    <citation type="journal article" date="1999" name="Nat. Genet.">
        <title>Comparative genomes of Chlamydia pneumoniae and C. trachomatis.</title>
        <authorList>
            <person name="Kalman S."/>
            <person name="Mitchell W.P."/>
            <person name="Marathe R."/>
            <person name="Lammel C.J."/>
            <person name="Fan J."/>
            <person name="Hyman R.W."/>
            <person name="Olinger L."/>
            <person name="Grimwood J."/>
            <person name="Davis R.W."/>
            <person name="Stephens R.S."/>
        </authorList>
    </citation>
    <scope>NUCLEOTIDE SEQUENCE [LARGE SCALE GENOMIC DNA]</scope>
    <source>
        <strain>CWL029</strain>
    </source>
</reference>
<reference key="2">
    <citation type="journal article" date="2000" name="Nucleic Acids Res.">
        <title>Genome sequences of Chlamydia trachomatis MoPn and Chlamydia pneumoniae AR39.</title>
        <authorList>
            <person name="Read T.D."/>
            <person name="Brunham R.C."/>
            <person name="Shen C."/>
            <person name="Gill S.R."/>
            <person name="Heidelberg J.F."/>
            <person name="White O."/>
            <person name="Hickey E.K."/>
            <person name="Peterson J.D."/>
            <person name="Utterback T.R."/>
            <person name="Berry K.J."/>
            <person name="Bass S."/>
            <person name="Linher K.D."/>
            <person name="Weidman J.F."/>
            <person name="Khouri H.M."/>
            <person name="Craven B."/>
            <person name="Bowman C."/>
            <person name="Dodson R.J."/>
            <person name="Gwinn M.L."/>
            <person name="Nelson W.C."/>
            <person name="DeBoy R.T."/>
            <person name="Kolonay J.F."/>
            <person name="McClarty G."/>
            <person name="Salzberg S.L."/>
            <person name="Eisen J.A."/>
            <person name="Fraser C.M."/>
        </authorList>
    </citation>
    <scope>NUCLEOTIDE SEQUENCE [LARGE SCALE GENOMIC DNA]</scope>
    <source>
        <strain>AR39</strain>
    </source>
</reference>
<reference key="3">
    <citation type="journal article" date="2000" name="Nucleic Acids Res.">
        <title>Comparison of whole genome sequences of Chlamydia pneumoniae J138 from Japan and CWL029 from USA.</title>
        <authorList>
            <person name="Shirai M."/>
            <person name="Hirakawa H."/>
            <person name="Kimoto M."/>
            <person name="Tabuchi M."/>
            <person name="Kishi F."/>
            <person name="Ouchi K."/>
            <person name="Shiba T."/>
            <person name="Ishii K."/>
            <person name="Hattori M."/>
            <person name="Kuhara S."/>
            <person name="Nakazawa T."/>
        </authorList>
    </citation>
    <scope>NUCLEOTIDE SEQUENCE [LARGE SCALE GENOMIC DNA]</scope>
    <source>
        <strain>J138</strain>
    </source>
</reference>
<reference key="4">
    <citation type="submission" date="2002-05" db="EMBL/GenBank/DDBJ databases">
        <title>The genome sequence of Chlamydia pneumoniae TW183 and comparison with other Chlamydia strains based on whole genome sequence analysis.</title>
        <authorList>
            <person name="Geng M.M."/>
            <person name="Schuhmacher A."/>
            <person name="Muehldorfer I."/>
            <person name="Bensch K.W."/>
            <person name="Schaefer K.P."/>
            <person name="Schneider S."/>
            <person name="Pohl T."/>
            <person name="Essig A."/>
            <person name="Marre R."/>
            <person name="Melchers K."/>
        </authorList>
    </citation>
    <scope>NUCLEOTIDE SEQUENCE [LARGE SCALE GENOMIC DNA]</scope>
    <source>
        <strain>TW-183</strain>
    </source>
</reference>
<gene>
    <name type="primary">pkn1</name>
    <name type="ordered locus">CPn_0148</name>
    <name type="ordered locus">CP_0625</name>
    <name type="ordered locus">CPj0148</name>
    <name type="ordered locus">CpB0149</name>
</gene>
<proteinExistence type="inferred from homology"/>
<accession>Q7AJA5</accession>
<accession>Q7VQ75</accession>
<accession>Q9K228</accession>
<accession>Q9Z935</accession>